<sequence>MEKQHSLIFLTGFSGSGKSSIGPLLANSLGYDFIDIDSAIEEQEGKTITRIFAEEGERAFRKLEQAMIATIAERKEMVASLGGGALEHTPTFELISTTGTLVYLKSDPKNLAKRLFHKTDRPLLRSSGTEKPDREALERNISAILEKRSPRYESAAITVYTDQKRIGSTVEELTRKIERFVRKQSSIEQNDQHKDRP</sequence>
<evidence type="ECO:0000255" key="1">
    <source>
        <dbReference type="HAMAP-Rule" id="MF_00109"/>
    </source>
</evidence>
<reference key="1">
    <citation type="submission" date="2007-03" db="EMBL/GenBank/DDBJ databases">
        <title>Complete sequence of Prosthecochloris vibrioformis DSM 265.</title>
        <authorList>
            <consortium name="US DOE Joint Genome Institute"/>
            <person name="Copeland A."/>
            <person name="Lucas S."/>
            <person name="Lapidus A."/>
            <person name="Barry K."/>
            <person name="Detter J.C."/>
            <person name="Glavina del Rio T."/>
            <person name="Hammon N."/>
            <person name="Israni S."/>
            <person name="Pitluck S."/>
            <person name="Schmutz J."/>
            <person name="Larimer F."/>
            <person name="Land M."/>
            <person name="Hauser L."/>
            <person name="Mikhailova N."/>
            <person name="Li T."/>
            <person name="Overmann J."/>
            <person name="Schuster S.C."/>
            <person name="Bryant D.A."/>
            <person name="Richardson P."/>
        </authorList>
    </citation>
    <scope>NUCLEOTIDE SEQUENCE [LARGE SCALE GENOMIC DNA]</scope>
    <source>
        <strain>DSM 265 / 1930</strain>
    </source>
</reference>
<feature type="chain" id="PRO_1000075955" description="Shikimate kinase">
    <location>
        <begin position="1"/>
        <end position="197"/>
    </location>
</feature>
<feature type="binding site" evidence="1">
    <location>
        <begin position="15"/>
        <end position="20"/>
    </location>
    <ligand>
        <name>ATP</name>
        <dbReference type="ChEBI" id="CHEBI:30616"/>
    </ligand>
</feature>
<feature type="binding site" evidence="1">
    <location>
        <position position="19"/>
    </location>
    <ligand>
        <name>Mg(2+)</name>
        <dbReference type="ChEBI" id="CHEBI:18420"/>
    </ligand>
</feature>
<feature type="binding site" evidence="1">
    <location>
        <position position="37"/>
    </location>
    <ligand>
        <name>substrate</name>
    </ligand>
</feature>
<feature type="binding site" evidence="1">
    <location>
        <position position="61"/>
    </location>
    <ligand>
        <name>substrate</name>
    </ligand>
</feature>
<feature type="binding site" evidence="1">
    <location>
        <position position="83"/>
    </location>
    <ligand>
        <name>substrate</name>
    </ligand>
</feature>
<feature type="binding site" evidence="1">
    <location>
        <position position="121"/>
    </location>
    <ligand>
        <name>ATP</name>
        <dbReference type="ChEBI" id="CHEBI:30616"/>
    </ligand>
</feature>
<feature type="binding site" evidence="1">
    <location>
        <position position="148"/>
    </location>
    <ligand>
        <name>substrate</name>
    </ligand>
</feature>
<organism>
    <name type="scientific">Chlorobium phaeovibrioides (strain DSM 265 / 1930)</name>
    <name type="common">Prosthecochloris vibrioformis (strain DSM 265)</name>
    <dbReference type="NCBI Taxonomy" id="290318"/>
    <lineage>
        <taxon>Bacteria</taxon>
        <taxon>Pseudomonadati</taxon>
        <taxon>Chlorobiota</taxon>
        <taxon>Chlorobiia</taxon>
        <taxon>Chlorobiales</taxon>
        <taxon>Chlorobiaceae</taxon>
        <taxon>Chlorobium/Pelodictyon group</taxon>
        <taxon>Chlorobium</taxon>
    </lineage>
</organism>
<accession>A4SFH8</accession>
<protein>
    <recommendedName>
        <fullName evidence="1">Shikimate kinase</fullName>
        <shortName evidence="1">SK</shortName>
        <ecNumber evidence="1">2.7.1.71</ecNumber>
    </recommendedName>
</protein>
<keyword id="KW-0028">Amino-acid biosynthesis</keyword>
<keyword id="KW-0057">Aromatic amino acid biosynthesis</keyword>
<keyword id="KW-0067">ATP-binding</keyword>
<keyword id="KW-0963">Cytoplasm</keyword>
<keyword id="KW-0418">Kinase</keyword>
<keyword id="KW-0460">Magnesium</keyword>
<keyword id="KW-0479">Metal-binding</keyword>
<keyword id="KW-0547">Nucleotide-binding</keyword>
<keyword id="KW-0808">Transferase</keyword>
<gene>
    <name evidence="1" type="primary">aroK</name>
    <name type="ordered locus">Cvib_1225</name>
</gene>
<proteinExistence type="inferred from homology"/>
<name>AROK_CHLPM</name>
<dbReference type="EC" id="2.7.1.71" evidence="1"/>
<dbReference type="EMBL" id="CP000607">
    <property type="protein sequence ID" value="ABP37237.1"/>
    <property type="molecule type" value="Genomic_DNA"/>
</dbReference>
<dbReference type="SMR" id="A4SFH8"/>
<dbReference type="STRING" id="290318.Cvib_1225"/>
<dbReference type="KEGG" id="pvi:Cvib_1225"/>
<dbReference type="eggNOG" id="COG0703">
    <property type="taxonomic scope" value="Bacteria"/>
</dbReference>
<dbReference type="HOGENOM" id="CLU_057607_2_1_10"/>
<dbReference type="OrthoDB" id="9800332at2"/>
<dbReference type="UniPathway" id="UPA00053">
    <property type="reaction ID" value="UER00088"/>
</dbReference>
<dbReference type="GO" id="GO:0005829">
    <property type="term" value="C:cytosol"/>
    <property type="evidence" value="ECO:0007669"/>
    <property type="project" value="TreeGrafter"/>
</dbReference>
<dbReference type="GO" id="GO:0005524">
    <property type="term" value="F:ATP binding"/>
    <property type="evidence" value="ECO:0007669"/>
    <property type="project" value="UniProtKB-UniRule"/>
</dbReference>
<dbReference type="GO" id="GO:0000287">
    <property type="term" value="F:magnesium ion binding"/>
    <property type="evidence" value="ECO:0007669"/>
    <property type="project" value="UniProtKB-UniRule"/>
</dbReference>
<dbReference type="GO" id="GO:0004765">
    <property type="term" value="F:shikimate kinase activity"/>
    <property type="evidence" value="ECO:0007669"/>
    <property type="project" value="UniProtKB-UniRule"/>
</dbReference>
<dbReference type="GO" id="GO:0008652">
    <property type="term" value="P:amino acid biosynthetic process"/>
    <property type="evidence" value="ECO:0007669"/>
    <property type="project" value="UniProtKB-KW"/>
</dbReference>
<dbReference type="GO" id="GO:0009073">
    <property type="term" value="P:aromatic amino acid family biosynthetic process"/>
    <property type="evidence" value="ECO:0007669"/>
    <property type="project" value="UniProtKB-KW"/>
</dbReference>
<dbReference type="GO" id="GO:0009423">
    <property type="term" value="P:chorismate biosynthetic process"/>
    <property type="evidence" value="ECO:0007669"/>
    <property type="project" value="UniProtKB-UniRule"/>
</dbReference>
<dbReference type="CDD" id="cd00464">
    <property type="entry name" value="SK"/>
    <property type="match status" value="1"/>
</dbReference>
<dbReference type="Gene3D" id="3.40.50.300">
    <property type="entry name" value="P-loop containing nucleotide triphosphate hydrolases"/>
    <property type="match status" value="1"/>
</dbReference>
<dbReference type="HAMAP" id="MF_00109">
    <property type="entry name" value="Shikimate_kinase"/>
    <property type="match status" value="1"/>
</dbReference>
<dbReference type="InterPro" id="IPR027417">
    <property type="entry name" value="P-loop_NTPase"/>
</dbReference>
<dbReference type="InterPro" id="IPR031322">
    <property type="entry name" value="Shikimate/glucono_kinase"/>
</dbReference>
<dbReference type="InterPro" id="IPR000623">
    <property type="entry name" value="Shikimate_kinase/TSH1"/>
</dbReference>
<dbReference type="PANTHER" id="PTHR21087">
    <property type="entry name" value="SHIKIMATE KINASE"/>
    <property type="match status" value="1"/>
</dbReference>
<dbReference type="PANTHER" id="PTHR21087:SF16">
    <property type="entry name" value="SHIKIMATE KINASE 1, CHLOROPLASTIC"/>
    <property type="match status" value="1"/>
</dbReference>
<dbReference type="Pfam" id="PF01202">
    <property type="entry name" value="SKI"/>
    <property type="match status" value="1"/>
</dbReference>
<dbReference type="PRINTS" id="PR01100">
    <property type="entry name" value="SHIKIMTKNASE"/>
</dbReference>
<dbReference type="SUPFAM" id="SSF52540">
    <property type="entry name" value="P-loop containing nucleoside triphosphate hydrolases"/>
    <property type="match status" value="1"/>
</dbReference>
<comment type="function">
    <text evidence="1">Catalyzes the specific phosphorylation of the 3-hydroxyl group of shikimic acid using ATP as a cosubstrate.</text>
</comment>
<comment type="catalytic activity">
    <reaction evidence="1">
        <text>shikimate + ATP = 3-phosphoshikimate + ADP + H(+)</text>
        <dbReference type="Rhea" id="RHEA:13121"/>
        <dbReference type="ChEBI" id="CHEBI:15378"/>
        <dbReference type="ChEBI" id="CHEBI:30616"/>
        <dbReference type="ChEBI" id="CHEBI:36208"/>
        <dbReference type="ChEBI" id="CHEBI:145989"/>
        <dbReference type="ChEBI" id="CHEBI:456216"/>
        <dbReference type="EC" id="2.7.1.71"/>
    </reaction>
</comment>
<comment type="cofactor">
    <cofactor evidence="1">
        <name>Mg(2+)</name>
        <dbReference type="ChEBI" id="CHEBI:18420"/>
    </cofactor>
    <text evidence="1">Binds 1 Mg(2+) ion per subunit.</text>
</comment>
<comment type="pathway">
    <text evidence="1">Metabolic intermediate biosynthesis; chorismate biosynthesis; chorismate from D-erythrose 4-phosphate and phosphoenolpyruvate: step 5/7.</text>
</comment>
<comment type="subunit">
    <text evidence="1">Monomer.</text>
</comment>
<comment type="subcellular location">
    <subcellularLocation>
        <location evidence="1">Cytoplasm</location>
    </subcellularLocation>
</comment>
<comment type="similarity">
    <text evidence="1">Belongs to the shikimate kinase family.</text>
</comment>